<comment type="function">
    <text evidence="1">Carrier of the growing fatty acid chain in fatty acid biosynthesis.</text>
</comment>
<comment type="pathway">
    <text evidence="1">Lipid metabolism; fatty acid biosynthesis.</text>
</comment>
<comment type="subcellular location">
    <subcellularLocation>
        <location evidence="1">Cytoplasm</location>
    </subcellularLocation>
</comment>
<comment type="PTM">
    <text evidence="1">4'-phosphopantetheine is transferred from CoA to a specific serine of apo-ACP by AcpS. This modification is essential for activity because fatty acids are bound in thioester linkage to the sulfhydryl of the prosthetic group.</text>
</comment>
<comment type="similarity">
    <text evidence="1">Belongs to the acyl carrier protein (ACP) family.</text>
</comment>
<keyword id="KW-0963">Cytoplasm</keyword>
<keyword id="KW-0275">Fatty acid biosynthesis</keyword>
<keyword id="KW-0276">Fatty acid metabolism</keyword>
<keyword id="KW-0444">Lipid biosynthesis</keyword>
<keyword id="KW-0443">Lipid metabolism</keyword>
<keyword id="KW-0596">Phosphopantetheine</keyword>
<keyword id="KW-0597">Phosphoprotein</keyword>
<keyword id="KW-1185">Reference proteome</keyword>
<name>ACP_XANP2</name>
<proteinExistence type="inferred from homology"/>
<organism>
    <name type="scientific">Xanthobacter autotrophicus (strain ATCC BAA-1158 / Py2)</name>
    <dbReference type="NCBI Taxonomy" id="78245"/>
    <lineage>
        <taxon>Bacteria</taxon>
        <taxon>Pseudomonadati</taxon>
        <taxon>Pseudomonadota</taxon>
        <taxon>Alphaproteobacteria</taxon>
        <taxon>Hyphomicrobiales</taxon>
        <taxon>Xanthobacteraceae</taxon>
        <taxon>Xanthobacter</taxon>
    </lineage>
</organism>
<dbReference type="EMBL" id="CP000781">
    <property type="protein sequence ID" value="ABS68362.1"/>
    <property type="molecule type" value="Genomic_DNA"/>
</dbReference>
<dbReference type="SMR" id="A7IK19"/>
<dbReference type="STRING" id="78245.Xaut_3132"/>
<dbReference type="KEGG" id="xau:Xaut_3132"/>
<dbReference type="eggNOG" id="COG0236">
    <property type="taxonomic scope" value="Bacteria"/>
</dbReference>
<dbReference type="HOGENOM" id="CLU_108696_5_1_5"/>
<dbReference type="OrthoDB" id="9804551at2"/>
<dbReference type="PhylomeDB" id="A7IK19"/>
<dbReference type="UniPathway" id="UPA00094"/>
<dbReference type="Proteomes" id="UP000002417">
    <property type="component" value="Chromosome"/>
</dbReference>
<dbReference type="GO" id="GO:0005829">
    <property type="term" value="C:cytosol"/>
    <property type="evidence" value="ECO:0007669"/>
    <property type="project" value="TreeGrafter"/>
</dbReference>
<dbReference type="GO" id="GO:0016020">
    <property type="term" value="C:membrane"/>
    <property type="evidence" value="ECO:0007669"/>
    <property type="project" value="GOC"/>
</dbReference>
<dbReference type="GO" id="GO:0000035">
    <property type="term" value="F:acyl binding"/>
    <property type="evidence" value="ECO:0007669"/>
    <property type="project" value="TreeGrafter"/>
</dbReference>
<dbReference type="GO" id="GO:0000036">
    <property type="term" value="F:acyl carrier activity"/>
    <property type="evidence" value="ECO:0007669"/>
    <property type="project" value="UniProtKB-UniRule"/>
</dbReference>
<dbReference type="GO" id="GO:0009245">
    <property type="term" value="P:lipid A biosynthetic process"/>
    <property type="evidence" value="ECO:0007669"/>
    <property type="project" value="TreeGrafter"/>
</dbReference>
<dbReference type="FunFam" id="1.10.1200.10:FF:000001">
    <property type="entry name" value="Acyl carrier protein"/>
    <property type="match status" value="1"/>
</dbReference>
<dbReference type="Gene3D" id="1.10.1200.10">
    <property type="entry name" value="ACP-like"/>
    <property type="match status" value="1"/>
</dbReference>
<dbReference type="HAMAP" id="MF_01217">
    <property type="entry name" value="Acyl_carrier"/>
    <property type="match status" value="1"/>
</dbReference>
<dbReference type="InterPro" id="IPR003231">
    <property type="entry name" value="ACP"/>
</dbReference>
<dbReference type="InterPro" id="IPR036736">
    <property type="entry name" value="ACP-like_sf"/>
</dbReference>
<dbReference type="InterPro" id="IPR009081">
    <property type="entry name" value="PP-bd_ACP"/>
</dbReference>
<dbReference type="InterPro" id="IPR006162">
    <property type="entry name" value="Ppantetheine_attach_site"/>
</dbReference>
<dbReference type="NCBIfam" id="TIGR00517">
    <property type="entry name" value="acyl_carrier"/>
    <property type="match status" value="1"/>
</dbReference>
<dbReference type="NCBIfam" id="NF002148">
    <property type="entry name" value="PRK00982.1-2"/>
    <property type="match status" value="1"/>
</dbReference>
<dbReference type="NCBIfam" id="NF002149">
    <property type="entry name" value="PRK00982.1-3"/>
    <property type="match status" value="1"/>
</dbReference>
<dbReference type="NCBIfam" id="NF002150">
    <property type="entry name" value="PRK00982.1-4"/>
    <property type="match status" value="1"/>
</dbReference>
<dbReference type="NCBIfam" id="NF002151">
    <property type="entry name" value="PRK00982.1-5"/>
    <property type="match status" value="1"/>
</dbReference>
<dbReference type="PANTHER" id="PTHR20863">
    <property type="entry name" value="ACYL CARRIER PROTEIN"/>
    <property type="match status" value="1"/>
</dbReference>
<dbReference type="PANTHER" id="PTHR20863:SF76">
    <property type="entry name" value="CARRIER DOMAIN-CONTAINING PROTEIN"/>
    <property type="match status" value="1"/>
</dbReference>
<dbReference type="Pfam" id="PF00550">
    <property type="entry name" value="PP-binding"/>
    <property type="match status" value="1"/>
</dbReference>
<dbReference type="SUPFAM" id="SSF47336">
    <property type="entry name" value="ACP-like"/>
    <property type="match status" value="1"/>
</dbReference>
<dbReference type="PROSITE" id="PS50075">
    <property type="entry name" value="CARRIER"/>
    <property type="match status" value="1"/>
</dbReference>
<dbReference type="PROSITE" id="PS00012">
    <property type="entry name" value="PHOSPHOPANTETHEINE"/>
    <property type="match status" value="1"/>
</dbReference>
<evidence type="ECO:0000255" key="1">
    <source>
        <dbReference type="HAMAP-Rule" id="MF_01217"/>
    </source>
</evidence>
<evidence type="ECO:0000255" key="2">
    <source>
        <dbReference type="PROSITE-ProRule" id="PRU00258"/>
    </source>
</evidence>
<accession>A7IK19</accession>
<feature type="chain" id="PRO_1000139076" description="Acyl carrier protein">
    <location>
        <begin position="1"/>
        <end position="78"/>
    </location>
</feature>
<feature type="domain" description="Carrier" evidence="2">
    <location>
        <begin position="2"/>
        <end position="77"/>
    </location>
</feature>
<feature type="modified residue" description="O-(pantetheine 4'-phosphoryl)serine" evidence="2">
    <location>
        <position position="37"/>
    </location>
</feature>
<sequence length="78" mass="8427">MSDIAERVKKIVAEHLGVEPEKVTESASFIDDLGADSLDTVELVMAFEEAFNCEIPDDAAETILTVGDAIKFLEKNAA</sequence>
<gene>
    <name evidence="1" type="primary">acpP</name>
    <name type="ordered locus">Xaut_3132</name>
</gene>
<reference key="1">
    <citation type="submission" date="2007-07" db="EMBL/GenBank/DDBJ databases">
        <title>Complete sequence of chromosome of Xanthobacter autotrophicus Py2.</title>
        <authorList>
            <consortium name="US DOE Joint Genome Institute"/>
            <person name="Copeland A."/>
            <person name="Lucas S."/>
            <person name="Lapidus A."/>
            <person name="Barry K."/>
            <person name="Glavina del Rio T."/>
            <person name="Hammon N."/>
            <person name="Israni S."/>
            <person name="Dalin E."/>
            <person name="Tice H."/>
            <person name="Pitluck S."/>
            <person name="Sims D."/>
            <person name="Brettin T."/>
            <person name="Bruce D."/>
            <person name="Detter J.C."/>
            <person name="Han C."/>
            <person name="Tapia R."/>
            <person name="Brainard J."/>
            <person name="Schmutz J."/>
            <person name="Larimer F."/>
            <person name="Land M."/>
            <person name="Hauser L."/>
            <person name="Kyrpides N."/>
            <person name="Kim E."/>
            <person name="Ensigns S.A."/>
            <person name="Richardson P."/>
        </authorList>
    </citation>
    <scope>NUCLEOTIDE SEQUENCE [LARGE SCALE GENOMIC DNA]</scope>
    <source>
        <strain>ATCC BAA-1158 / Py2</strain>
    </source>
</reference>
<protein>
    <recommendedName>
        <fullName evidence="1">Acyl carrier protein</fullName>
        <shortName evidence="1">ACP</shortName>
    </recommendedName>
</protein>